<proteinExistence type="inferred from homology"/>
<evidence type="ECO:0000255" key="1">
    <source>
        <dbReference type="HAMAP-Rule" id="MF_00679"/>
    </source>
</evidence>
<keyword id="KW-0067">ATP-binding</keyword>
<keyword id="KW-0143">Chaperone</keyword>
<keyword id="KW-0547">Nucleotide-binding</keyword>
<keyword id="KW-1185">Reference proteome</keyword>
<comment type="function">
    <text evidence="1">Chaperone involved in the maturation of iron-sulfur cluster-containing proteins. Has a low intrinsic ATPase activity which is markedly stimulated by HscB.</text>
</comment>
<comment type="similarity">
    <text evidence="1">Belongs to the heat shock protein 70 family.</text>
</comment>
<gene>
    <name evidence="1" type="primary">hscA</name>
    <name type="ordered locus">AZOSEA36580</name>
    <name type="ORF">ebA6396</name>
</gene>
<sequence>MALLQIAEPGQSAEPHKHRLAVGIDLGTTNSLVATVRNGIAVCLADEAGRSMLPSIVRYHADGRIEVGQTAAAAHTTDPKNTIMSVKRFMGRGLKDVSHVESTPYDFIDAGGMVRLRTVQGVKTPVEISAEILKTLGARAEASLGGPLTGAVITVPAYFDDAQRQATKDAAKLAGLNVLRLLNEPTAAAVAYGLDNASEGVYAIYDLGGGTFDLSILKLSRGIFEVLATNGDAALGGDDFDHRLFCWILDKAAIEPPTSDDSRRLLMKAREAKELLTASEEAPIRARLSSDEEVNLVVTREEFATMTQHLIAKTMAPMRKVLRDAGLGPEDVKGVVMVGGATRMPHVQRAVAEFFGQEPLTNLDPDKVVALGAAIQANVLAGNRKDEDEWLLLDVIPLSLGLETMGGLTEKVVPRNSTLPIARAQEFTTFKDGQTAMAFHVVQGEREMVKDCRSLARFELRGIPPMVAGAARIRVAFQVDADGLLSVSAREMSSGVEASVLVKPSYGLTDDEIASMLKEGVEHVGDDMHARALREQQVEAERVIEATTHALEQDGALLNADERASIEVAIAELKQLAAGDDPRIVKKGIEALARATDEFAARRMDNSIRSALAGHKVDEIQV</sequence>
<feature type="chain" id="PRO_0000078614" description="Chaperone protein HscA homolog">
    <location>
        <begin position="1"/>
        <end position="622"/>
    </location>
</feature>
<reference key="1">
    <citation type="journal article" date="2005" name="Arch. Microbiol.">
        <title>The genome sequence of an anaerobic aromatic-degrading denitrifying bacterium, strain EbN1.</title>
        <authorList>
            <person name="Rabus R."/>
            <person name="Kube M."/>
            <person name="Heider J."/>
            <person name="Beck A."/>
            <person name="Heitmann K."/>
            <person name="Widdel F."/>
            <person name="Reinhardt R."/>
        </authorList>
    </citation>
    <scope>NUCLEOTIDE SEQUENCE [LARGE SCALE GENOMIC DNA]</scope>
    <source>
        <strain>DSM 19018 / LMG 30748 / EbN1</strain>
    </source>
</reference>
<organism>
    <name type="scientific">Aromatoleum aromaticum (strain DSM 19018 / LMG 30748 / EbN1)</name>
    <name type="common">Azoarcus sp. (strain EbN1)</name>
    <dbReference type="NCBI Taxonomy" id="76114"/>
    <lineage>
        <taxon>Bacteria</taxon>
        <taxon>Pseudomonadati</taxon>
        <taxon>Pseudomonadota</taxon>
        <taxon>Betaproteobacteria</taxon>
        <taxon>Rhodocyclales</taxon>
        <taxon>Rhodocyclaceae</taxon>
        <taxon>Aromatoleum</taxon>
    </lineage>
</organism>
<accession>Q5NYT1</accession>
<dbReference type="EMBL" id="CR555306">
    <property type="protein sequence ID" value="CAI09783.1"/>
    <property type="molecule type" value="Genomic_DNA"/>
</dbReference>
<dbReference type="RefSeq" id="WP_011239436.1">
    <property type="nucleotide sequence ID" value="NC_006513.1"/>
</dbReference>
<dbReference type="SMR" id="Q5NYT1"/>
<dbReference type="STRING" id="76114.ebA6396"/>
<dbReference type="KEGG" id="eba:ebA6396"/>
<dbReference type="eggNOG" id="COG0443">
    <property type="taxonomic scope" value="Bacteria"/>
</dbReference>
<dbReference type="HOGENOM" id="CLU_005965_2_4_4"/>
<dbReference type="OrthoDB" id="9766019at2"/>
<dbReference type="Proteomes" id="UP000006552">
    <property type="component" value="Chromosome"/>
</dbReference>
<dbReference type="GO" id="GO:0005524">
    <property type="term" value="F:ATP binding"/>
    <property type="evidence" value="ECO:0007669"/>
    <property type="project" value="UniProtKB-KW"/>
</dbReference>
<dbReference type="GO" id="GO:0016887">
    <property type="term" value="F:ATP hydrolysis activity"/>
    <property type="evidence" value="ECO:0007669"/>
    <property type="project" value="UniProtKB-UniRule"/>
</dbReference>
<dbReference type="GO" id="GO:0140662">
    <property type="term" value="F:ATP-dependent protein folding chaperone"/>
    <property type="evidence" value="ECO:0007669"/>
    <property type="project" value="InterPro"/>
</dbReference>
<dbReference type="GO" id="GO:0051082">
    <property type="term" value="F:unfolded protein binding"/>
    <property type="evidence" value="ECO:0007669"/>
    <property type="project" value="InterPro"/>
</dbReference>
<dbReference type="GO" id="GO:0016226">
    <property type="term" value="P:iron-sulfur cluster assembly"/>
    <property type="evidence" value="ECO:0007669"/>
    <property type="project" value="InterPro"/>
</dbReference>
<dbReference type="CDD" id="cd10236">
    <property type="entry name" value="ASKHA_NBD_HSP70_HscA"/>
    <property type="match status" value="1"/>
</dbReference>
<dbReference type="FunFam" id="3.30.420.40:FF:000046">
    <property type="entry name" value="Chaperone protein HscA"/>
    <property type="match status" value="1"/>
</dbReference>
<dbReference type="FunFam" id="2.60.34.10:FF:000005">
    <property type="entry name" value="Chaperone protein HscA homolog"/>
    <property type="match status" value="1"/>
</dbReference>
<dbReference type="Gene3D" id="1.20.1270.10">
    <property type="match status" value="1"/>
</dbReference>
<dbReference type="Gene3D" id="3.30.420.40">
    <property type="match status" value="2"/>
</dbReference>
<dbReference type="Gene3D" id="3.90.640.10">
    <property type="entry name" value="Actin, Chain A, domain 4"/>
    <property type="match status" value="1"/>
</dbReference>
<dbReference type="Gene3D" id="2.60.34.10">
    <property type="entry name" value="Substrate Binding Domain Of DNAk, Chain A, domain 1"/>
    <property type="match status" value="1"/>
</dbReference>
<dbReference type="HAMAP" id="MF_00679">
    <property type="entry name" value="HscA"/>
    <property type="match status" value="1"/>
</dbReference>
<dbReference type="InterPro" id="IPR043129">
    <property type="entry name" value="ATPase_NBD"/>
</dbReference>
<dbReference type="InterPro" id="IPR018181">
    <property type="entry name" value="Heat_shock_70_CS"/>
</dbReference>
<dbReference type="InterPro" id="IPR042039">
    <property type="entry name" value="HscA_NBD"/>
</dbReference>
<dbReference type="InterPro" id="IPR029048">
    <property type="entry name" value="HSP70_C_sf"/>
</dbReference>
<dbReference type="InterPro" id="IPR029047">
    <property type="entry name" value="HSP70_peptide-bd_sf"/>
</dbReference>
<dbReference type="InterPro" id="IPR013126">
    <property type="entry name" value="Hsp_70_fam"/>
</dbReference>
<dbReference type="InterPro" id="IPR010236">
    <property type="entry name" value="ISC_FeS_clus_asmbl_HscA"/>
</dbReference>
<dbReference type="NCBIfam" id="TIGR01991">
    <property type="entry name" value="HscA"/>
    <property type="match status" value="1"/>
</dbReference>
<dbReference type="NCBIfam" id="NF003520">
    <property type="entry name" value="PRK05183.1"/>
    <property type="match status" value="1"/>
</dbReference>
<dbReference type="PANTHER" id="PTHR19375">
    <property type="entry name" value="HEAT SHOCK PROTEIN 70KDA"/>
    <property type="match status" value="1"/>
</dbReference>
<dbReference type="Pfam" id="PF00012">
    <property type="entry name" value="HSP70"/>
    <property type="match status" value="1"/>
</dbReference>
<dbReference type="PRINTS" id="PR00301">
    <property type="entry name" value="HEATSHOCK70"/>
</dbReference>
<dbReference type="SUPFAM" id="SSF53067">
    <property type="entry name" value="Actin-like ATPase domain"/>
    <property type="match status" value="2"/>
</dbReference>
<dbReference type="SUPFAM" id="SSF100934">
    <property type="entry name" value="Heat shock protein 70kD (HSP70), C-terminal subdomain"/>
    <property type="match status" value="1"/>
</dbReference>
<dbReference type="SUPFAM" id="SSF100920">
    <property type="entry name" value="Heat shock protein 70kD (HSP70), peptide-binding domain"/>
    <property type="match status" value="1"/>
</dbReference>
<dbReference type="PROSITE" id="PS00297">
    <property type="entry name" value="HSP70_1"/>
    <property type="match status" value="1"/>
</dbReference>
<dbReference type="PROSITE" id="PS00329">
    <property type="entry name" value="HSP70_2"/>
    <property type="match status" value="1"/>
</dbReference>
<dbReference type="PROSITE" id="PS01036">
    <property type="entry name" value="HSP70_3"/>
    <property type="match status" value="1"/>
</dbReference>
<name>HSCA_AROAE</name>
<protein>
    <recommendedName>
        <fullName evidence="1">Chaperone protein HscA homolog</fullName>
    </recommendedName>
</protein>